<sequence>MGQGPSGGLNRQGDRKPDGGEKKEKKFEPAAPPARVGRKQRKQKGPEAAARLPTVTPSTKCKLRLLKLERIKDYLLMEEEFVANQERLKPQEEKAEEDRSKVDDLRGTPMSVGNLEELIDENHAIVSSSVGPEYYVGILSFVDKDQLEPGCSILMHNKVLSVVGILQDEVDPMVSVMKVEKAPLESYADIGGLEAQIQEIKEAVELPLTHPELYEDIGIKPPKGVILYGEPGTGKTLLAKAVANSTSATFLRVVGSELIQKYLGDGPKLVRELFRVADDLSPSIVFIDEIDAVGTKRYDANSGGEREIQRTMLELLNQLDGFDSRGDVKVILATNRIESLDPALLRPGRIDRKIEFPLPDIKTRRRIFQIHTSKMTLAEDVNLEEFVMTKDEFSGADIKAICTEAGLLALRERRMKVTHVDFKKAKEKVMFKKKEGVPEGLYM</sequence>
<evidence type="ECO:0000250" key="1">
    <source>
        <dbReference type="UniProtKB" id="Q9SEI2"/>
    </source>
</evidence>
<evidence type="ECO:0000255" key="2"/>
<evidence type="ECO:0000256" key="3">
    <source>
        <dbReference type="SAM" id="MobiDB-lite"/>
    </source>
</evidence>
<evidence type="ECO:0000269" key="4">
    <source>
    </source>
</evidence>
<evidence type="ECO:0000269" key="5">
    <source>
    </source>
</evidence>
<evidence type="ECO:0000269" key="6">
    <source>
    </source>
</evidence>
<evidence type="ECO:0000269" key="7">
    <source>
    </source>
</evidence>
<evidence type="ECO:0000269" key="8">
    <source>
    </source>
</evidence>
<evidence type="ECO:0000303" key="9">
    <source>
    </source>
</evidence>
<evidence type="ECO:0000305" key="10"/>
<evidence type="ECO:0000312" key="11">
    <source>
        <dbReference type="Araport" id="AT2G20140"/>
    </source>
</evidence>
<evidence type="ECO:0000312" key="12">
    <source>
        <dbReference type="EMBL" id="AAD24384.1"/>
    </source>
</evidence>
<keyword id="KW-0067">ATP-binding</keyword>
<keyword id="KW-0963">Cytoplasm</keyword>
<keyword id="KW-1017">Isopeptide bond</keyword>
<keyword id="KW-0547">Nucleotide-binding</keyword>
<keyword id="KW-0539">Nucleus</keyword>
<keyword id="KW-0647">Proteasome</keyword>
<keyword id="KW-1185">Reference proteome</keyword>
<keyword id="KW-0832">Ubl conjugation</keyword>
<name>PRS4B_ARATH</name>
<accession>Q9SL67</accession>
<accession>Q8LAV7</accession>
<accession>Q94JT0</accession>
<dbReference type="EMBL" id="AC006081">
    <property type="protein sequence ID" value="AAD24384.1"/>
    <property type="molecule type" value="Genomic_DNA"/>
</dbReference>
<dbReference type="EMBL" id="CP002685">
    <property type="protein sequence ID" value="AEC06970.1"/>
    <property type="molecule type" value="Genomic_DNA"/>
</dbReference>
<dbReference type="EMBL" id="AF372977">
    <property type="protein sequence ID" value="AAK50114.1"/>
    <property type="molecule type" value="mRNA"/>
</dbReference>
<dbReference type="EMBL" id="AY035072">
    <property type="protein sequence ID" value="AAK59577.1"/>
    <property type="molecule type" value="mRNA"/>
</dbReference>
<dbReference type="EMBL" id="AY056335">
    <property type="protein sequence ID" value="AAL07184.1"/>
    <property type="molecule type" value="mRNA"/>
</dbReference>
<dbReference type="EMBL" id="AY087584">
    <property type="protein sequence ID" value="AAM65126.1"/>
    <property type="molecule type" value="mRNA"/>
</dbReference>
<dbReference type="PIR" id="E84585">
    <property type="entry name" value="E84585"/>
</dbReference>
<dbReference type="RefSeq" id="NP_179604.1">
    <property type="nucleotide sequence ID" value="NM_127572.4"/>
</dbReference>
<dbReference type="SMR" id="Q9SL67"/>
<dbReference type="BioGRID" id="1887">
    <property type="interactions" value="164"/>
</dbReference>
<dbReference type="FunCoup" id="Q9SL67">
    <property type="interactions" value="4353"/>
</dbReference>
<dbReference type="IntAct" id="Q9SL67">
    <property type="interactions" value="1"/>
</dbReference>
<dbReference type="STRING" id="3702.Q9SL67"/>
<dbReference type="iPTMnet" id="Q9SL67"/>
<dbReference type="PaxDb" id="3702-AT2G20140.1"/>
<dbReference type="ProteomicsDB" id="226222"/>
<dbReference type="EnsemblPlants" id="AT2G20140.1">
    <property type="protein sequence ID" value="AT2G20140.1"/>
    <property type="gene ID" value="AT2G20140"/>
</dbReference>
<dbReference type="GeneID" id="816533"/>
<dbReference type="Gramene" id="AT2G20140.1">
    <property type="protein sequence ID" value="AT2G20140.1"/>
    <property type="gene ID" value="AT2G20140"/>
</dbReference>
<dbReference type="KEGG" id="ath:AT2G20140"/>
<dbReference type="Araport" id="AT2G20140"/>
<dbReference type="TAIR" id="AT2G20140">
    <property type="gene designation" value="RPT2B"/>
</dbReference>
<dbReference type="eggNOG" id="KOG0726">
    <property type="taxonomic scope" value="Eukaryota"/>
</dbReference>
<dbReference type="HOGENOM" id="CLU_000688_2_3_1"/>
<dbReference type="InParanoid" id="Q9SL67"/>
<dbReference type="OMA" id="HDWLLME"/>
<dbReference type="PhylomeDB" id="Q9SL67"/>
<dbReference type="PRO" id="PR:Q9SL67"/>
<dbReference type="Proteomes" id="UP000006548">
    <property type="component" value="Chromosome 2"/>
</dbReference>
<dbReference type="ExpressionAtlas" id="Q9SL67">
    <property type="expression patterns" value="baseline and differential"/>
</dbReference>
<dbReference type="GO" id="GO:0005829">
    <property type="term" value="C:cytosol"/>
    <property type="evidence" value="ECO:0007005"/>
    <property type="project" value="TAIR"/>
</dbReference>
<dbReference type="GO" id="GO:0005739">
    <property type="term" value="C:mitochondrion"/>
    <property type="evidence" value="ECO:0007005"/>
    <property type="project" value="TAIR"/>
</dbReference>
<dbReference type="GO" id="GO:0005634">
    <property type="term" value="C:nucleus"/>
    <property type="evidence" value="ECO:0007669"/>
    <property type="project" value="UniProtKB-SubCell"/>
</dbReference>
<dbReference type="GO" id="GO:0000502">
    <property type="term" value="C:proteasome complex"/>
    <property type="evidence" value="ECO:0000314"/>
    <property type="project" value="TAIR"/>
</dbReference>
<dbReference type="GO" id="GO:0005524">
    <property type="term" value="F:ATP binding"/>
    <property type="evidence" value="ECO:0007669"/>
    <property type="project" value="UniProtKB-KW"/>
</dbReference>
<dbReference type="GO" id="GO:0016887">
    <property type="term" value="F:ATP hydrolysis activity"/>
    <property type="evidence" value="ECO:0007669"/>
    <property type="project" value="InterPro"/>
</dbReference>
<dbReference type="GO" id="GO:0007292">
    <property type="term" value="P:female gamete generation"/>
    <property type="evidence" value="ECO:0000316"/>
    <property type="project" value="TAIR"/>
</dbReference>
<dbReference type="GO" id="GO:0010078">
    <property type="term" value="P:maintenance of root meristem identity"/>
    <property type="evidence" value="ECO:0000315"/>
    <property type="project" value="TAIR"/>
</dbReference>
<dbReference type="GO" id="GO:0048232">
    <property type="term" value="P:male gamete generation"/>
    <property type="evidence" value="ECO:0000316"/>
    <property type="project" value="TAIR"/>
</dbReference>
<dbReference type="FunFam" id="2.40.50.140:FF:000067">
    <property type="entry name" value="26S protease regulatory subunit 4"/>
    <property type="match status" value="1"/>
</dbReference>
<dbReference type="FunFam" id="1.10.8.60:FF:000007">
    <property type="entry name" value="26S proteasome regulatory subunit 4"/>
    <property type="match status" value="1"/>
</dbReference>
<dbReference type="FunFam" id="3.40.50.300:FF:000039">
    <property type="entry name" value="26S proteasome regulatory subunit 4"/>
    <property type="match status" value="1"/>
</dbReference>
<dbReference type="Gene3D" id="1.10.8.60">
    <property type="match status" value="1"/>
</dbReference>
<dbReference type="Gene3D" id="2.40.50.140">
    <property type="entry name" value="Nucleic acid-binding proteins"/>
    <property type="match status" value="1"/>
</dbReference>
<dbReference type="Gene3D" id="3.40.50.300">
    <property type="entry name" value="P-loop containing nucleotide triphosphate hydrolases"/>
    <property type="match status" value="1"/>
</dbReference>
<dbReference type="InterPro" id="IPR050221">
    <property type="entry name" value="26S_Proteasome_ATPase"/>
</dbReference>
<dbReference type="InterPro" id="IPR003593">
    <property type="entry name" value="AAA+_ATPase"/>
</dbReference>
<dbReference type="InterPro" id="IPR041569">
    <property type="entry name" value="AAA_lid_3"/>
</dbReference>
<dbReference type="InterPro" id="IPR003959">
    <property type="entry name" value="ATPase_AAA_core"/>
</dbReference>
<dbReference type="InterPro" id="IPR003960">
    <property type="entry name" value="ATPase_AAA_CS"/>
</dbReference>
<dbReference type="InterPro" id="IPR012340">
    <property type="entry name" value="NA-bd_OB-fold"/>
</dbReference>
<dbReference type="InterPro" id="IPR027417">
    <property type="entry name" value="P-loop_NTPase"/>
</dbReference>
<dbReference type="InterPro" id="IPR032501">
    <property type="entry name" value="Prot_ATP_ID_OB_2nd"/>
</dbReference>
<dbReference type="PANTHER" id="PTHR23073">
    <property type="entry name" value="26S PROTEASOME REGULATORY SUBUNIT"/>
    <property type="match status" value="1"/>
</dbReference>
<dbReference type="Pfam" id="PF00004">
    <property type="entry name" value="AAA"/>
    <property type="match status" value="1"/>
</dbReference>
<dbReference type="Pfam" id="PF17862">
    <property type="entry name" value="AAA_lid_3"/>
    <property type="match status" value="1"/>
</dbReference>
<dbReference type="Pfam" id="PF16450">
    <property type="entry name" value="Prot_ATP_ID_OB_C"/>
    <property type="match status" value="1"/>
</dbReference>
<dbReference type="SMART" id="SM00382">
    <property type="entry name" value="AAA"/>
    <property type="match status" value="1"/>
</dbReference>
<dbReference type="SUPFAM" id="SSF52540">
    <property type="entry name" value="P-loop containing nucleoside triphosphate hydrolases"/>
    <property type="match status" value="1"/>
</dbReference>
<dbReference type="PROSITE" id="PS00674">
    <property type="entry name" value="AAA"/>
    <property type="match status" value="1"/>
</dbReference>
<protein>
    <recommendedName>
        <fullName evidence="10">26S proteasome regulatory subunit 4 homolog B</fullName>
    </recommendedName>
    <alternativeName>
        <fullName evidence="9">26S proteasome AAA-ATPase subunit RPT2b</fullName>
    </alternativeName>
    <alternativeName>
        <fullName evidence="10">26S proteasome subunit 4 homolog B</fullName>
    </alternativeName>
    <alternativeName>
        <fullName evidence="10">Regulatory particle triple-A ATPase subunit 2b</fullName>
    </alternativeName>
</protein>
<organism>
    <name type="scientific">Arabidopsis thaliana</name>
    <name type="common">Mouse-ear cress</name>
    <dbReference type="NCBI Taxonomy" id="3702"/>
    <lineage>
        <taxon>Eukaryota</taxon>
        <taxon>Viridiplantae</taxon>
        <taxon>Streptophyta</taxon>
        <taxon>Embryophyta</taxon>
        <taxon>Tracheophyta</taxon>
        <taxon>Spermatophyta</taxon>
        <taxon>Magnoliopsida</taxon>
        <taxon>eudicotyledons</taxon>
        <taxon>Gunneridae</taxon>
        <taxon>Pentapetalae</taxon>
        <taxon>rosids</taxon>
        <taxon>malvids</taxon>
        <taxon>Brassicales</taxon>
        <taxon>Brassicaceae</taxon>
        <taxon>Camelineae</taxon>
        <taxon>Arabidopsis</taxon>
    </lineage>
</organism>
<feature type="chain" id="PRO_0000391484" description="26S proteasome regulatory subunit 4 homolog B">
    <location>
        <begin position="1"/>
        <end position="443"/>
    </location>
</feature>
<feature type="region of interest" description="Disordered" evidence="3">
    <location>
        <begin position="1"/>
        <end position="55"/>
    </location>
</feature>
<feature type="region of interest" description="Disordered" evidence="3">
    <location>
        <begin position="87"/>
        <end position="108"/>
    </location>
</feature>
<feature type="compositionally biased region" description="Basic and acidic residues" evidence="3">
    <location>
        <begin position="12"/>
        <end position="28"/>
    </location>
</feature>
<feature type="compositionally biased region" description="Basic and acidic residues" evidence="3">
    <location>
        <begin position="87"/>
        <end position="106"/>
    </location>
</feature>
<feature type="binding site" evidence="2">
    <location>
        <begin position="229"/>
        <end position="236"/>
    </location>
    <ligand>
        <name>ATP</name>
        <dbReference type="ChEBI" id="CHEBI:30616"/>
    </ligand>
</feature>
<feature type="cross-link" description="Glycyl lysine isopeptide (Lys-Gly) (interchain with G-Cter in ubiquitin)" evidence="1">
    <location>
        <position position="296"/>
    </location>
</feature>
<feature type="cross-link" description="Glycyl lysine isopeptide (Lys-Gly) (interchain with G-Cter in ubiquitin)" evidence="1">
    <location>
        <position position="433"/>
    </location>
</feature>
<feature type="sequence conflict" description="In Ref. 4; AAM65126." evidence="10" ref="4">
    <original>N</original>
    <variation>H</variation>
    <location>
        <position position="10"/>
    </location>
</feature>
<feature type="sequence conflict" description="In Ref. 3; AAK50114." evidence="10" ref="3">
    <original>M</original>
    <variation>V</variation>
    <location>
        <position position="177"/>
    </location>
</feature>
<feature type="sequence conflict" description="In Ref. 4; AAM65126." evidence="10" ref="4">
    <original>V</original>
    <variation>G</variation>
    <location>
        <position position="285"/>
    </location>
</feature>
<reference key="1">
    <citation type="journal article" date="1999" name="Nature">
        <title>Sequence and analysis of chromosome 2 of the plant Arabidopsis thaliana.</title>
        <authorList>
            <person name="Lin X."/>
            <person name="Kaul S."/>
            <person name="Rounsley S.D."/>
            <person name="Shea T.P."/>
            <person name="Benito M.-I."/>
            <person name="Town C.D."/>
            <person name="Fujii C.Y."/>
            <person name="Mason T.M."/>
            <person name="Bowman C.L."/>
            <person name="Barnstead M.E."/>
            <person name="Feldblyum T.V."/>
            <person name="Buell C.R."/>
            <person name="Ketchum K.A."/>
            <person name="Lee J.J."/>
            <person name="Ronning C.M."/>
            <person name="Koo H.L."/>
            <person name="Moffat K.S."/>
            <person name="Cronin L.A."/>
            <person name="Shen M."/>
            <person name="Pai G."/>
            <person name="Van Aken S."/>
            <person name="Umayam L."/>
            <person name="Tallon L.J."/>
            <person name="Gill J.E."/>
            <person name="Adams M.D."/>
            <person name="Carrera A.J."/>
            <person name="Creasy T.H."/>
            <person name="Goodman H.M."/>
            <person name="Somerville C.R."/>
            <person name="Copenhaver G.P."/>
            <person name="Preuss D."/>
            <person name="Nierman W.C."/>
            <person name="White O."/>
            <person name="Eisen J.A."/>
            <person name="Salzberg S.L."/>
            <person name="Fraser C.M."/>
            <person name="Venter J.C."/>
        </authorList>
    </citation>
    <scope>NUCLEOTIDE SEQUENCE [LARGE SCALE GENOMIC DNA]</scope>
    <source>
        <strain>cv. Columbia</strain>
    </source>
</reference>
<reference key="2">
    <citation type="journal article" date="2017" name="Plant J.">
        <title>Araport11: a complete reannotation of the Arabidopsis thaliana reference genome.</title>
        <authorList>
            <person name="Cheng C.Y."/>
            <person name="Krishnakumar V."/>
            <person name="Chan A.P."/>
            <person name="Thibaud-Nissen F."/>
            <person name="Schobel S."/>
            <person name="Town C.D."/>
        </authorList>
    </citation>
    <scope>GENOME REANNOTATION</scope>
    <source>
        <strain>cv. Columbia</strain>
    </source>
</reference>
<reference key="3">
    <citation type="journal article" date="2003" name="Science">
        <title>Empirical analysis of transcriptional activity in the Arabidopsis genome.</title>
        <authorList>
            <person name="Yamada K."/>
            <person name="Lim J."/>
            <person name="Dale J.M."/>
            <person name="Chen H."/>
            <person name="Shinn P."/>
            <person name="Palm C.J."/>
            <person name="Southwick A.M."/>
            <person name="Wu H.C."/>
            <person name="Kim C.J."/>
            <person name="Nguyen M."/>
            <person name="Pham P.K."/>
            <person name="Cheuk R.F."/>
            <person name="Karlin-Newmann G."/>
            <person name="Liu S.X."/>
            <person name="Lam B."/>
            <person name="Sakano H."/>
            <person name="Wu T."/>
            <person name="Yu G."/>
            <person name="Miranda M."/>
            <person name="Quach H.L."/>
            <person name="Tripp M."/>
            <person name="Chang C.H."/>
            <person name="Lee J.M."/>
            <person name="Toriumi M.J."/>
            <person name="Chan M.M."/>
            <person name="Tang C.C."/>
            <person name="Onodera C.S."/>
            <person name="Deng J.M."/>
            <person name="Akiyama K."/>
            <person name="Ansari Y."/>
            <person name="Arakawa T."/>
            <person name="Banh J."/>
            <person name="Banno F."/>
            <person name="Bowser L."/>
            <person name="Brooks S.Y."/>
            <person name="Carninci P."/>
            <person name="Chao Q."/>
            <person name="Choy N."/>
            <person name="Enju A."/>
            <person name="Goldsmith A.D."/>
            <person name="Gurjal M."/>
            <person name="Hansen N.F."/>
            <person name="Hayashizaki Y."/>
            <person name="Johnson-Hopson C."/>
            <person name="Hsuan V.W."/>
            <person name="Iida K."/>
            <person name="Karnes M."/>
            <person name="Khan S."/>
            <person name="Koesema E."/>
            <person name="Ishida J."/>
            <person name="Jiang P.X."/>
            <person name="Jones T."/>
            <person name="Kawai J."/>
            <person name="Kamiya A."/>
            <person name="Meyers C."/>
            <person name="Nakajima M."/>
            <person name="Narusaka M."/>
            <person name="Seki M."/>
            <person name="Sakurai T."/>
            <person name="Satou M."/>
            <person name="Tamse R."/>
            <person name="Vaysberg M."/>
            <person name="Wallender E.K."/>
            <person name="Wong C."/>
            <person name="Yamamura Y."/>
            <person name="Yuan S."/>
            <person name="Shinozaki K."/>
            <person name="Davis R.W."/>
            <person name="Theologis A."/>
            <person name="Ecker J.R."/>
        </authorList>
    </citation>
    <scope>NUCLEOTIDE SEQUENCE [LARGE SCALE MRNA]</scope>
    <source>
        <strain>cv. Columbia</strain>
    </source>
</reference>
<reference key="4">
    <citation type="submission" date="2002-03" db="EMBL/GenBank/DDBJ databases">
        <title>Full-length cDNA from Arabidopsis thaliana.</title>
        <authorList>
            <person name="Brover V.V."/>
            <person name="Troukhan M.E."/>
            <person name="Alexandrov N.A."/>
            <person name="Lu Y.-P."/>
            <person name="Flavell R.B."/>
            <person name="Feldmann K.A."/>
        </authorList>
    </citation>
    <scope>NUCLEOTIDE SEQUENCE [LARGE SCALE MRNA]</scope>
</reference>
<reference key="5">
    <citation type="journal article" date="1999" name="Plant J.">
        <title>Structural and functional analysis of the six regulatory particle triple-A ATPase subunits from the Arabidopsis 26S proteasome.</title>
        <authorList>
            <person name="Fu H."/>
            <person name="Doelling J.H."/>
            <person name="Rubin D.M."/>
            <person name="Vierstra R.D."/>
        </authorList>
    </citation>
    <scope>GENE FAMILY</scope>
    <scope>NOMENCLATURE</scope>
</reference>
<reference key="6">
    <citation type="journal article" date="2004" name="J. Biol. Chem.">
        <title>Purification of the Arabidopsis 26 S proteasome: biochemical and molecular analyses revealed the presence of multiple isoforms.</title>
        <authorList>
            <person name="Yang P."/>
            <person name="Fu H."/>
            <person name="Walker J."/>
            <person name="Papa C.M."/>
            <person name="Smalle J."/>
            <person name="Ju Y.-M."/>
            <person name="Vierstra R.D."/>
        </authorList>
    </citation>
    <scope>SUBUNIT</scope>
    <scope>IDENTIFICATION BY MASS SPECTROMETRY</scope>
</reference>
<reference key="7">
    <citation type="journal article" date="2009" name="Plant J.">
        <title>Regulation of leaf organ size by the Arabidopsis RPT2a 19S proteasome subunit.</title>
        <authorList>
            <person name="Sonoda Y."/>
            <person name="Sako K."/>
            <person name="Maki Y."/>
            <person name="Yamazaki N."/>
            <person name="Yamamoto H."/>
            <person name="Ikeda A."/>
            <person name="Yamaguchi J."/>
        </authorList>
    </citation>
    <scope>TISSUE SPECIFICITY</scope>
</reference>
<reference key="8">
    <citation type="journal article" date="2010" name="J. Biol. Chem.">
        <title>Affinity purification of the Arabidopsis 26 S proteasome reveals a diverse array of plant proteolytic complexes.</title>
        <authorList>
            <person name="Book A.J."/>
            <person name="Gladman N.P."/>
            <person name="Lee S.S."/>
            <person name="Scalf M."/>
            <person name="Smith L.M."/>
            <person name="Vierstra R.D."/>
        </authorList>
    </citation>
    <scope>IDENTIFICATION BY MASS SPECTROMETRY</scope>
    <scope>CHARACTERIZATION OF THE 26S PROTEASOME COMPLEX</scope>
    <scope>SUBUNIT</scope>
</reference>
<reference key="9">
    <citation type="journal article" date="2011" name="Plant Cell">
        <title>The RPT2 subunit of the 26S proteasome directs complex assembly, histone dynamics, and gametophyte and sporophyte development in Arabidopsis.</title>
        <authorList>
            <person name="Lee K.H."/>
            <person name="Minami A."/>
            <person name="Marshall R.S."/>
            <person name="Book A.J."/>
            <person name="Farmer L.M."/>
            <person name="Walker J.M."/>
            <person name="Vierstra R.D."/>
        </authorList>
    </citation>
    <scope>IDENTIFICATION BY MASS SPECTROMETRY</scope>
    <scope>FUNCTION</scope>
    <scope>SUBCELLULAR LOCATION</scope>
    <scope>DISRUPTION PHENOTYPE</scope>
</reference>
<reference key="10">
    <citation type="journal article" date="2011" name="Plant Cell Physiol.">
        <title>Arabidopsis RPT2a encoding the 26S proteasome subunit is required for various aspects of root meristem maintenance, and regulates gametogenesis redundantly with its homolog, RPT2b.</title>
        <authorList>
            <person name="Ueda M."/>
            <person name="Matsui K."/>
            <person name="Ishiguro S."/>
            <person name="Kato T."/>
            <person name="Tabata S."/>
            <person name="Kobayashi M."/>
            <person name="Seki M."/>
            <person name="Shinozaki K."/>
            <person name="Okada K."/>
        </authorList>
    </citation>
    <scope>FUNCTION</scope>
    <scope>DISRUPTION PHENOTYPE</scope>
</reference>
<proteinExistence type="evidence at protein level"/>
<comment type="function">
    <text evidence="7 8">The 26S protease is involved in the ATP-dependent degradation of ubiquitinated proteins. The regulatory (or ATPase) complex confers ATP dependency and substrate specificity to the 26S complex (PubMed:22158466). Acts redundantly with RPT2A in the regulation of gametogenesis (PubMed:21784786, PubMed:22158466). With RPT2A plays a critical role in 26S proteasome assembly (PubMed:22158466).</text>
</comment>
<comment type="subunit">
    <text evidence="4 6">Component of the 19S regulatory particle (RP/PA700) base subcomplex of the 26S proteasome. The 26S proteasome is composed of a core protease (CP), known as the 20S proteasome, capped at one or both ends by the 19S regulatory particle (RP/PA700). The RP/PA700 complex is composed of at least 17 different subunits in two subcomplexes, the base and the lid, which form the portions proximal and distal to the 20S proteolytic core, respectively.</text>
</comment>
<comment type="subcellular location">
    <subcellularLocation>
        <location evidence="8">Cytoplasm</location>
    </subcellularLocation>
    <subcellularLocation>
        <location evidence="8">Nucleus</location>
    </subcellularLocation>
</comment>
<comment type="tissue specificity">
    <text evidence="5">Preferentially expressed in the root and shoot apical meristem.</text>
</comment>
<comment type="disruption phenotype">
    <text evidence="7 8">No visible phenotype under normal growth conditions (PubMed:22158466). The double mutants rpt2a and rpt2b are blocked in both male and female gametogenesis (PubMed:21784786, PubMed:22158466).</text>
</comment>
<comment type="similarity">
    <text evidence="10">Belongs to the AAA ATPase family.</text>
</comment>
<gene>
    <name evidence="9" type="primary">RPT2B</name>
    <name evidence="11" type="ordered locus">At2g20140</name>
    <name evidence="12" type="ORF">T2G17.6</name>
</gene>